<evidence type="ECO:0000269" key="1">
    <source>
    </source>
</evidence>
<evidence type="ECO:0000305" key="2"/>
<name>VA53_DOLMA</name>
<comment type="subcellular location">
    <subcellularLocation>
        <location>Secreted</location>
    </subcellularLocation>
</comment>
<comment type="tissue specificity">
    <text>Expressed by the venom gland.</text>
</comment>
<comment type="allergen">
    <text>Causes an allergic reaction in human.</text>
</comment>
<comment type="similarity">
    <text evidence="2">Belongs to the CRISP family. Venom allergen 5-like subfamily.</text>
</comment>
<proteinExistence type="evidence at protein level"/>
<sequence length="215" mass="24270">PIINLSFGEANNYCKIKCSRGIHTLCKFGTSMKPNCGSKLVKVHGVSNDEKNEIVNRHNQFRQKVAKGLETRGNPGPQPPAKNMNVLVWNDELAKIAQTWANQCSFGHDQCRNTEKYQVGQNVAIASTTGNSYATMSKLIEMWENEVKDFNPKKGTMGDNNFSKVGHYTQMVWGKTKEIGCGSVKYIENNWHTHYLVCNYGPAGNYMDQPIYERK</sequence>
<dbReference type="EMBL" id="J03602">
    <property type="protein sequence ID" value="AAA28302.1"/>
    <property type="status" value="ALT_TERM"/>
    <property type="molecule type" value="mRNA"/>
</dbReference>
<dbReference type="PIR" id="B31085">
    <property type="entry name" value="B31085"/>
</dbReference>
<dbReference type="SMR" id="P10737"/>
<dbReference type="Allergome" id="1657">
    <property type="allergen name" value="Dol m 5.02"/>
</dbReference>
<dbReference type="Allergome" id="330">
    <property type="allergen name" value="Dol m 5"/>
</dbReference>
<dbReference type="GO" id="GO:0005576">
    <property type="term" value="C:extracellular region"/>
    <property type="evidence" value="ECO:0007669"/>
    <property type="project" value="UniProtKB-SubCell"/>
</dbReference>
<dbReference type="CDD" id="cd05380">
    <property type="entry name" value="CAP_euk"/>
    <property type="match status" value="1"/>
</dbReference>
<dbReference type="Gene3D" id="3.40.33.10">
    <property type="entry name" value="CAP"/>
    <property type="match status" value="1"/>
</dbReference>
<dbReference type="InterPro" id="IPR018244">
    <property type="entry name" value="Allrgn_V5/Tpx1_CS"/>
</dbReference>
<dbReference type="InterPro" id="IPR014044">
    <property type="entry name" value="CAP_dom"/>
</dbReference>
<dbReference type="InterPro" id="IPR035940">
    <property type="entry name" value="CAP_sf"/>
</dbReference>
<dbReference type="InterPro" id="IPR001283">
    <property type="entry name" value="CRISP-related"/>
</dbReference>
<dbReference type="InterPro" id="IPR002413">
    <property type="entry name" value="V5_allergen-like"/>
</dbReference>
<dbReference type="PANTHER" id="PTHR10334">
    <property type="entry name" value="CYSTEINE-RICH SECRETORY PROTEIN-RELATED"/>
    <property type="match status" value="1"/>
</dbReference>
<dbReference type="Pfam" id="PF00188">
    <property type="entry name" value="CAP"/>
    <property type="match status" value="1"/>
</dbReference>
<dbReference type="PRINTS" id="PR00838">
    <property type="entry name" value="V5ALLERGEN"/>
</dbReference>
<dbReference type="PRINTS" id="PR00837">
    <property type="entry name" value="V5TPXLIKE"/>
</dbReference>
<dbReference type="SMART" id="SM00198">
    <property type="entry name" value="SCP"/>
    <property type="match status" value="1"/>
</dbReference>
<dbReference type="SUPFAM" id="SSF55797">
    <property type="entry name" value="PR-1-like"/>
    <property type="match status" value="1"/>
</dbReference>
<dbReference type="PROSITE" id="PS01009">
    <property type="entry name" value="CRISP_1"/>
    <property type="match status" value="1"/>
</dbReference>
<dbReference type="PROSITE" id="PS01010">
    <property type="entry name" value="CRISP_2"/>
    <property type="match status" value="1"/>
</dbReference>
<protein>
    <recommendedName>
        <fullName>Venom allergen 5.02</fullName>
    </recommendedName>
    <alternativeName>
        <fullName>Allergen Dol m V-B</fullName>
    </alternativeName>
    <alternativeName>
        <fullName>Antigen 5 form 3</fullName>
        <shortName>Ag5-3</shortName>
    </alternativeName>
    <alternativeName>
        <fullName>Cysteine-rich venom protein</fullName>
        <shortName>CRVP</shortName>
    </alternativeName>
    <allergenName>Dol m 5.02</allergenName>
</protein>
<keyword id="KW-0020">Allergen</keyword>
<keyword id="KW-0903">Direct protein sequencing</keyword>
<keyword id="KW-1015">Disulfide bond</keyword>
<keyword id="KW-0964">Secreted</keyword>
<keyword id="KW-0732">Signal</keyword>
<reference key="1">
    <citation type="journal article" date="1988" name="Proc. Natl. Acad. Sci. U.S.A.">
        <title>cDNA cloning and primary structure of a white-face hornet venom allergen, antigen 5.</title>
        <authorList>
            <person name="Fang K.S.Y."/>
            <person name="Vitale M."/>
            <person name="Fehlner P."/>
            <person name="King T.P."/>
        </authorList>
    </citation>
    <scope>NUCLEOTIDE SEQUENCE [MRNA]</scope>
    <scope>PARTIAL PROTEIN SEQUENCE</scope>
    <source>
        <tissue>Venom</tissue>
        <tissue>Venom gland</tissue>
    </source>
</reference>
<reference key="2">
    <citation type="journal article" date="1990" name="Protein Seq. Data Anal.">
        <title>Structural studies of a hornet venom allergen antigen 5, Dol m V and its sequence similarity with other proteins.</title>
        <authorList>
            <person name="King T.P."/>
            <person name="Moran D."/>
            <person name="Wang D.F."/>
            <person name="Kochoumian L."/>
            <person name="Chait B.T."/>
        </authorList>
    </citation>
    <scope>PARTIAL PROTEIN SEQUENCE</scope>
    <scope>DISULFIDE BONDS</scope>
    <source>
        <tissue>Venom</tissue>
    </source>
</reference>
<feature type="signal peptide">
    <location>
        <begin position="1" status="less than"/>
        <end position="10"/>
    </location>
</feature>
<feature type="chain" id="PRO_0000006295" description="Venom allergen 5.02">
    <location>
        <begin position="11"/>
        <end position="215"/>
    </location>
</feature>
<feature type="domain" description="SCP">
    <location>
        <begin position="55"/>
        <end position="200"/>
    </location>
</feature>
<feature type="disulfide bond" evidence="1">
    <location>
        <begin position="14"/>
        <end position="26"/>
    </location>
</feature>
<feature type="disulfide bond" evidence="1">
    <location>
        <begin position="18"/>
        <end position="111"/>
    </location>
</feature>
<feature type="disulfide bond" evidence="1">
    <location>
        <begin position="36"/>
        <end position="104"/>
    </location>
</feature>
<feature type="disulfide bond" evidence="1">
    <location>
        <begin position="181"/>
        <end position="198"/>
    </location>
</feature>
<feature type="non-terminal residue">
    <location>
        <position position="1"/>
    </location>
</feature>
<accession>P10737</accession>
<organism>
    <name type="scientific">Dolichovespula maculata</name>
    <name type="common">Bald-faced hornet</name>
    <name type="synonym">Vespula maculata</name>
    <dbReference type="NCBI Taxonomy" id="7441"/>
    <lineage>
        <taxon>Eukaryota</taxon>
        <taxon>Metazoa</taxon>
        <taxon>Ecdysozoa</taxon>
        <taxon>Arthropoda</taxon>
        <taxon>Hexapoda</taxon>
        <taxon>Insecta</taxon>
        <taxon>Pterygota</taxon>
        <taxon>Neoptera</taxon>
        <taxon>Endopterygota</taxon>
        <taxon>Hymenoptera</taxon>
        <taxon>Apocrita</taxon>
        <taxon>Aculeata</taxon>
        <taxon>Vespoidea</taxon>
        <taxon>Vespidae</taxon>
        <taxon>Vespinae</taxon>
        <taxon>Dolichovespula</taxon>
    </lineage>
</organism>